<evidence type="ECO:0000305" key="1"/>
<protein>
    <recommendedName>
        <fullName>Uncharacterized protein aq_aa07</fullName>
    </recommendedName>
</protein>
<dbReference type="EMBL" id="AE000667">
    <property type="protein sequence ID" value="AAC07954.1"/>
    <property type="molecule type" value="Genomic_DNA"/>
</dbReference>
<dbReference type="RefSeq" id="NP_046402.1">
    <property type="nucleotide sequence ID" value="NC_001880.1"/>
</dbReference>
<dbReference type="RefSeq" id="WP_010890548.1">
    <property type="nucleotide sequence ID" value="NC_001880.1"/>
</dbReference>
<dbReference type="SMR" id="O66402"/>
<dbReference type="EnsemblBacteria" id="AAC07954">
    <property type="protein sequence ID" value="AAC07954"/>
    <property type="gene ID" value="aq_aa07"/>
</dbReference>
<dbReference type="KEGG" id="aae:aq_aa07"/>
<dbReference type="HOGENOM" id="CLU_876169_0_0_0"/>
<dbReference type="InParanoid" id="O66402"/>
<dbReference type="Proteomes" id="UP000000798">
    <property type="component" value="Plasmid ece1"/>
</dbReference>
<gene>
    <name type="ordered locus">aq_aa07</name>
</gene>
<geneLocation type="plasmid">
    <name>ece1</name>
</geneLocation>
<sequence length="317" mass="37890">MEHEKAIKEILGIDDRIRLYAIEKYEKKKKTFYRFTGWDTYKKKMVKVHIPRKLEKEIFSLWKEHQKEKQQLKALEQEVKALLEKYKDAEKIKEVLERIAQESITKTASSHALKTYTDKAKELFKKFEKDLINLYKEGVLKRLTILQVLYLLANLKEMSEEQKNPQFLFKKGISTIIKVAKNERIPNPFGTLKNDFFLSGTQTPYDFLLSSFLEEVLEETLRELLEKEIEKIEAERRAKEYEEKMEKIKEIVEWFESLPHKIKQTAKEVISQNTVEVAEKILKDMEDGNFSLKEVQDYLEKSTRENLVDYFRYLKNL</sequence>
<keyword id="KW-0614">Plasmid</keyword>
<keyword id="KW-1185">Reference proteome</keyword>
<name>YZ07_AQUAE</name>
<comment type="similarity">
    <text evidence="1">To A.aeolicus AA11 and AA34.</text>
</comment>
<organism>
    <name type="scientific">Aquifex aeolicus (strain VF5)</name>
    <dbReference type="NCBI Taxonomy" id="224324"/>
    <lineage>
        <taxon>Bacteria</taxon>
        <taxon>Pseudomonadati</taxon>
        <taxon>Aquificota</taxon>
        <taxon>Aquificia</taxon>
        <taxon>Aquificales</taxon>
        <taxon>Aquificaceae</taxon>
        <taxon>Aquifex</taxon>
    </lineage>
</organism>
<accession>O66402</accession>
<proteinExistence type="predicted"/>
<feature type="chain" id="PRO_0000186983" description="Uncharacterized protein aq_aa07">
    <location>
        <begin position="1"/>
        <end position="317"/>
    </location>
</feature>
<reference key="1">
    <citation type="journal article" date="1998" name="Nature">
        <title>The complete genome of the hyperthermophilic bacterium Aquifex aeolicus.</title>
        <authorList>
            <person name="Deckert G."/>
            <person name="Warren P.V."/>
            <person name="Gaasterland T."/>
            <person name="Young W.G."/>
            <person name="Lenox A.L."/>
            <person name="Graham D.E."/>
            <person name="Overbeek R."/>
            <person name="Snead M.A."/>
            <person name="Keller M."/>
            <person name="Aujay M."/>
            <person name="Huber R."/>
            <person name="Feldman R.A."/>
            <person name="Short J.M."/>
            <person name="Olsen G.J."/>
            <person name="Swanson R.V."/>
        </authorList>
    </citation>
    <scope>NUCLEOTIDE SEQUENCE [LARGE SCALE GENOMIC DNA]</scope>
    <source>
        <strain>VF5</strain>
    </source>
</reference>